<name>LEG_ELEEL</name>
<feature type="chain" id="PRO_0000076956" description="Beta-galactoside-binding lectin">
    <location>
        <begin position="1"/>
        <end position="129"/>
    </location>
</feature>
<feature type="domain" description="Galectin" evidence="2">
    <location>
        <begin position="4"/>
        <end position="129"/>
    </location>
</feature>
<feature type="binding site" evidence="1">
    <location>
        <begin position="69"/>
        <end position="75"/>
    </location>
    <ligand>
        <name>a beta-D-galactoside</name>
        <dbReference type="ChEBI" id="CHEBI:28034"/>
    </ligand>
</feature>
<feature type="modified residue" description="N-acetylserine" evidence="3">
    <location>
        <position position="1"/>
    </location>
</feature>
<accession>P08520</accession>
<reference key="1">
    <citation type="journal article" date="1987" name="Proc. Natl. Acad. Sci. U.S.A.">
        <title>Extensive amino acid sequence homologies between animal lectins.</title>
        <authorList>
            <person name="Paroutaud P."/>
            <person name="Levi G."/>
            <person name="Teichberg V.I."/>
            <person name="Strosberg A.D."/>
        </authorList>
    </citation>
    <scope>PROTEIN SEQUENCE</scope>
    <scope>ACETYLATION AT SER-1</scope>
</reference>
<protein>
    <recommendedName>
        <fullName>Beta-galactoside-binding lectin</fullName>
    </recommendedName>
    <alternativeName>
        <fullName>14 kDa lectin</fullName>
    </alternativeName>
    <alternativeName>
        <fullName>Electrolectin</fullName>
    </alternativeName>
</protein>
<comment type="function">
    <text>This protein binds beta-galactoside. Its physiological function is not yet known.</text>
</comment>
<keyword id="KW-0007">Acetylation</keyword>
<keyword id="KW-0903">Direct protein sequencing</keyword>
<keyword id="KW-0430">Lectin</keyword>
<keyword id="KW-1185">Reference proteome</keyword>
<dbReference type="PIR" id="A28302">
    <property type="entry name" value="A28302"/>
</dbReference>
<dbReference type="SMR" id="P08520"/>
<dbReference type="STRING" id="8005.ENSEEEP00000042478"/>
<dbReference type="iPTMnet" id="P08520"/>
<dbReference type="Proteomes" id="UP000314983">
    <property type="component" value="Unassembled WGS sequence"/>
</dbReference>
<dbReference type="GO" id="GO:0005615">
    <property type="term" value="C:extracellular space"/>
    <property type="evidence" value="ECO:0007669"/>
    <property type="project" value="TreeGrafter"/>
</dbReference>
<dbReference type="GO" id="GO:0030246">
    <property type="term" value="F:carbohydrate binding"/>
    <property type="evidence" value="ECO:0007669"/>
    <property type="project" value="UniProtKB-KW"/>
</dbReference>
<dbReference type="GO" id="GO:0016936">
    <property type="term" value="F:galactoside binding"/>
    <property type="evidence" value="ECO:0007669"/>
    <property type="project" value="TreeGrafter"/>
</dbReference>
<dbReference type="GO" id="GO:0043236">
    <property type="term" value="F:laminin binding"/>
    <property type="evidence" value="ECO:0007669"/>
    <property type="project" value="TreeGrafter"/>
</dbReference>
<dbReference type="CDD" id="cd00070">
    <property type="entry name" value="GLECT"/>
    <property type="match status" value="1"/>
</dbReference>
<dbReference type="FunFam" id="2.60.120.200:FF:000021">
    <property type="entry name" value="Galectin"/>
    <property type="match status" value="1"/>
</dbReference>
<dbReference type="Gene3D" id="2.60.120.200">
    <property type="match status" value="1"/>
</dbReference>
<dbReference type="InterPro" id="IPR013320">
    <property type="entry name" value="ConA-like_dom_sf"/>
</dbReference>
<dbReference type="InterPro" id="IPR044156">
    <property type="entry name" value="Galectin-like"/>
</dbReference>
<dbReference type="InterPro" id="IPR001079">
    <property type="entry name" value="Galectin_CRD"/>
</dbReference>
<dbReference type="PANTHER" id="PTHR11346">
    <property type="entry name" value="GALECTIN"/>
    <property type="match status" value="1"/>
</dbReference>
<dbReference type="PANTHER" id="PTHR11346:SF112">
    <property type="entry name" value="GALECTIN"/>
    <property type="match status" value="1"/>
</dbReference>
<dbReference type="Pfam" id="PF00337">
    <property type="entry name" value="Gal-bind_lectin"/>
    <property type="match status" value="1"/>
</dbReference>
<dbReference type="SMART" id="SM00908">
    <property type="entry name" value="Gal-bind_lectin"/>
    <property type="match status" value="1"/>
</dbReference>
<dbReference type="SMART" id="SM00276">
    <property type="entry name" value="GLECT"/>
    <property type="match status" value="1"/>
</dbReference>
<dbReference type="SUPFAM" id="SSF49899">
    <property type="entry name" value="Concanavalin A-like lectins/glucanases"/>
    <property type="match status" value="1"/>
</dbReference>
<dbReference type="PROSITE" id="PS51304">
    <property type="entry name" value="GALECTIN"/>
    <property type="match status" value="1"/>
</dbReference>
<organism>
    <name type="scientific">Electrophorus electricus</name>
    <name type="common">Electric eel</name>
    <name type="synonym">Gymnotus electricus</name>
    <dbReference type="NCBI Taxonomy" id="8005"/>
    <lineage>
        <taxon>Eukaryota</taxon>
        <taxon>Metazoa</taxon>
        <taxon>Chordata</taxon>
        <taxon>Craniata</taxon>
        <taxon>Vertebrata</taxon>
        <taxon>Euteleostomi</taxon>
        <taxon>Actinopterygii</taxon>
        <taxon>Neopterygii</taxon>
        <taxon>Teleostei</taxon>
        <taxon>Ostariophysi</taxon>
        <taxon>Gymnotiformes</taxon>
        <taxon>Gymnotoidei</taxon>
        <taxon>Gymnotidae</taxon>
        <taxon>Electrophorus</taxon>
    </lineage>
</organism>
<proteinExistence type="evidence at protein level"/>
<sequence>SMNGVVDERMSFKAGQNLTVKGVPSIDSTNFAINVGNSAEDLALHINPRFDAHGDQQAVVVNSFQGGNWGTEQREGGFPFKQGEDFKIQITFNSEEFRIILPDGSEIHFPNNRYMHFEGEARIYSIEIK</sequence>
<evidence type="ECO:0000255" key="1"/>
<evidence type="ECO:0000255" key="2">
    <source>
        <dbReference type="PROSITE-ProRule" id="PRU00639"/>
    </source>
</evidence>
<evidence type="ECO:0000305" key="3">
    <source>
    </source>
</evidence>